<proteinExistence type="evidence at transcript level"/>
<gene>
    <name type="primary">psmc3ip</name>
</gene>
<dbReference type="EMBL" id="BC082900">
    <property type="protein sequence ID" value="AAH82900.1"/>
    <property type="molecule type" value="mRNA"/>
</dbReference>
<dbReference type="RefSeq" id="NP_001088086.1">
    <property type="nucleotide sequence ID" value="NM_001094617.1"/>
</dbReference>
<dbReference type="SMR" id="Q63ZL2"/>
<dbReference type="DNASU" id="494783"/>
<dbReference type="GeneID" id="494783"/>
<dbReference type="KEGG" id="xla:494783"/>
<dbReference type="AGR" id="Xenbase:XB-GENE-987673"/>
<dbReference type="CTD" id="494783"/>
<dbReference type="Xenbase" id="XB-GENE-987673">
    <property type="gene designation" value="psmc3ip.L"/>
</dbReference>
<dbReference type="OrthoDB" id="272266at2759"/>
<dbReference type="Proteomes" id="UP000186698">
    <property type="component" value="Chromosome 9_10L"/>
</dbReference>
<dbReference type="Bgee" id="494783">
    <property type="expression patterns" value="Expressed in oocyte and 19 other cell types or tissues"/>
</dbReference>
<dbReference type="GO" id="GO:0000794">
    <property type="term" value="C:condensed nuclear chromosome"/>
    <property type="evidence" value="ECO:0000318"/>
    <property type="project" value="GO_Central"/>
</dbReference>
<dbReference type="GO" id="GO:0120231">
    <property type="term" value="C:DNA recombinase auxiliary factor complex"/>
    <property type="evidence" value="ECO:0000318"/>
    <property type="project" value="GO_Central"/>
</dbReference>
<dbReference type="GO" id="GO:0003690">
    <property type="term" value="F:double-stranded DNA binding"/>
    <property type="evidence" value="ECO:0000318"/>
    <property type="project" value="GO_Central"/>
</dbReference>
<dbReference type="GO" id="GO:0120230">
    <property type="term" value="F:recombinase activator activity"/>
    <property type="evidence" value="ECO:0000318"/>
    <property type="project" value="GO_Central"/>
</dbReference>
<dbReference type="GO" id="GO:0007129">
    <property type="term" value="P:homologous chromosome pairing at meiosis"/>
    <property type="evidence" value="ECO:0000318"/>
    <property type="project" value="GO_Central"/>
</dbReference>
<dbReference type="GO" id="GO:0000709">
    <property type="term" value="P:meiotic joint molecule formation"/>
    <property type="evidence" value="ECO:0000318"/>
    <property type="project" value="GO_Central"/>
</dbReference>
<dbReference type="GO" id="GO:0010774">
    <property type="term" value="P:meiotic strand invasion involved in reciprocal meiotic recombination"/>
    <property type="evidence" value="ECO:0000318"/>
    <property type="project" value="GO_Central"/>
</dbReference>
<dbReference type="FunFam" id="1.10.10.10:FF:000394">
    <property type="entry name" value="Homologous-pairing protein 2 homolog"/>
    <property type="match status" value="1"/>
</dbReference>
<dbReference type="Gene3D" id="1.10.10.10">
    <property type="entry name" value="Winged helix-like DNA-binding domain superfamily/Winged helix DNA-binding domain"/>
    <property type="match status" value="1"/>
</dbReference>
<dbReference type="InterPro" id="IPR010776">
    <property type="entry name" value="Hop2_WH_dom"/>
</dbReference>
<dbReference type="InterPro" id="IPR040661">
    <property type="entry name" value="LZ3wCH"/>
</dbReference>
<dbReference type="InterPro" id="IPR036388">
    <property type="entry name" value="WH-like_DNA-bd_sf"/>
</dbReference>
<dbReference type="InterPro" id="IPR036390">
    <property type="entry name" value="WH_DNA-bd_sf"/>
</dbReference>
<dbReference type="PANTHER" id="PTHR15938:SF0">
    <property type="entry name" value="HOMOLOGOUS-PAIRING PROTEIN 2 HOMOLOG"/>
    <property type="match status" value="1"/>
</dbReference>
<dbReference type="PANTHER" id="PTHR15938">
    <property type="entry name" value="TBP-1 INTERACTING PROTEIN"/>
    <property type="match status" value="1"/>
</dbReference>
<dbReference type="Pfam" id="PF18517">
    <property type="entry name" value="LZ3wCH"/>
    <property type="match status" value="1"/>
</dbReference>
<dbReference type="Pfam" id="PF07106">
    <property type="entry name" value="TBPIP"/>
    <property type="match status" value="1"/>
</dbReference>
<dbReference type="SUPFAM" id="SSF46785">
    <property type="entry name" value="Winged helix' DNA-binding domain"/>
    <property type="match status" value="1"/>
</dbReference>
<organism>
    <name type="scientific">Xenopus laevis</name>
    <name type="common">African clawed frog</name>
    <dbReference type="NCBI Taxonomy" id="8355"/>
    <lineage>
        <taxon>Eukaryota</taxon>
        <taxon>Metazoa</taxon>
        <taxon>Chordata</taxon>
        <taxon>Craniata</taxon>
        <taxon>Vertebrata</taxon>
        <taxon>Euteleostomi</taxon>
        <taxon>Amphibia</taxon>
        <taxon>Batrachia</taxon>
        <taxon>Anura</taxon>
        <taxon>Pipoidea</taxon>
        <taxon>Pipidae</taxon>
        <taxon>Xenopodinae</taxon>
        <taxon>Xenopus</taxon>
        <taxon>Xenopus</taxon>
    </lineage>
</organism>
<feature type="chain" id="PRO_0000314138" description="Homologous-pairing protein 2 homolog">
    <location>
        <begin position="1"/>
        <end position="214"/>
    </location>
</feature>
<feature type="region of interest" description="DNA-binding" evidence="1">
    <location>
        <begin position="115"/>
        <end position="179"/>
    </location>
</feature>
<feature type="coiled-coil region" evidence="2">
    <location>
        <begin position="79"/>
        <end position="147"/>
    </location>
</feature>
<keyword id="KW-0175">Coiled coil</keyword>
<keyword id="KW-0233">DNA recombination</keyword>
<keyword id="KW-0469">Meiosis</keyword>
<keyword id="KW-0539">Nucleus</keyword>
<keyword id="KW-1185">Reference proteome</keyword>
<reference key="1">
    <citation type="submission" date="2004-09" db="EMBL/GenBank/DDBJ databases">
        <authorList>
            <consortium name="NIH - Xenopus Gene Collection (XGC) project"/>
        </authorList>
    </citation>
    <scope>NUCLEOTIDE SEQUENCE [LARGE SCALE MRNA]</scope>
</reference>
<comment type="function">
    <text evidence="1">Plays an important role in meiotic recombination. Stimulates DMC1-mediated strand exchange required for pairing of homologous chromosomes during meiosis (By similarity).</text>
</comment>
<comment type="subcellular location">
    <subcellularLocation>
        <location evidence="1">Nucleus</location>
    </subcellularLocation>
</comment>
<comment type="similarity">
    <text evidence="3">Belongs to the HOP2 family.</text>
</comment>
<sequence>MSKSKEAAASSIILKYLNDQNRPYSTQDVFSNLQRDHGLGKTAVVKTMELLAQKGKIKEKVYGKQKIYFADQEQFPSVSDSELKDLDAQVTELSSKLQSSQQSCRQLESELKDLTSSLTTEEMLKEVSCLKEECDRHEHKLTNIKSATNHVTPAEKEKVYGERKHFCKEWKKRKRMATDIFDAILEGYPKSKKQFFEEVGVETDEDCNVTVPDV</sequence>
<evidence type="ECO:0000250" key="1"/>
<evidence type="ECO:0000255" key="2"/>
<evidence type="ECO:0000305" key="3"/>
<name>HOP2_XENLA</name>
<protein>
    <recommendedName>
        <fullName>Homologous-pairing protein 2 homolog</fullName>
    </recommendedName>
    <alternativeName>
        <fullName>PSMC3-interacting protein</fullName>
    </alternativeName>
    <alternativeName>
        <fullName>Proteasome 26S ATPase subunit 3-interacting protein</fullName>
    </alternativeName>
</protein>
<accession>Q63ZL2</accession>